<organism>
    <name type="scientific">Arabidopsis thaliana</name>
    <name type="common">Mouse-ear cress</name>
    <dbReference type="NCBI Taxonomy" id="3702"/>
    <lineage>
        <taxon>Eukaryota</taxon>
        <taxon>Viridiplantae</taxon>
        <taxon>Streptophyta</taxon>
        <taxon>Embryophyta</taxon>
        <taxon>Tracheophyta</taxon>
        <taxon>Spermatophyta</taxon>
        <taxon>Magnoliopsida</taxon>
        <taxon>eudicotyledons</taxon>
        <taxon>Gunneridae</taxon>
        <taxon>Pentapetalae</taxon>
        <taxon>rosids</taxon>
        <taxon>malvids</taxon>
        <taxon>Brassicales</taxon>
        <taxon>Brassicaceae</taxon>
        <taxon>Camelineae</taxon>
        <taxon>Arabidopsis</taxon>
    </lineage>
</organism>
<gene>
    <name type="ordered locus">At5g65560</name>
    <name type="ORF">K21L13.7</name>
</gene>
<sequence>MIRRIQPRCNSGLTGSVSAFEVLKKKFSTDVTVPSPVTRRQFCSVSPLLRNLPEEESDSMSVPHRLLSILSKPNWHKSPSLKSMVSAISPSHVSSLFSLDLDPKTALNFSHWISQNPRYKHSVYSYASLLTLLINNGYVGVVFKIRLLMIKSCDSVGDALYVLDLCRKMNKDERFELKYKLIIGCYNTLLNSLARFGLVDEMKQVYMEMLEDKVCPNIYTYNKMVNGYCKLGNVEEANQYVSKIVEAGLDPDFFTYTSLIMGYCQRKDLDSAFKVFNEMPLKGCRRNEVAYTHLIHGLCVARRIDEAMDLFVKMKDDECFPTVRTYTVLIKSLCGSERKSEALNLVKEMEETGIKPNIHTYTVLIDSLCSQCKFEKARELLGQMLEKGLMPNVITYNALINGYCKRGMIEDAVDVVELMESRKLSPNTRTYNELIKGYCKSNVHKAMGVLNKMLERKVLPDVVTYNSLIDGQCRSGNFDSAYRLLSLMNDRGLVPDQWTYTSMIDSLCKSKRVEEACDLFDSLEQKGVNPNVVMYTALIDGYCKAGKVDEAHLMLEKMLSKNCLPNSLTFNALIHGLCADGKLKEATLLEEKMVKIGLQPTVSTDTILIHRLLKDGDFDHAYSRFQQMLSSGTKPDAHTYTTFIQTYCREGRLLDAEDMMAKMRENGVSPDLFTYSSLIKGYGDLGQTNFAFDVLKRMRDTGCEPSQHTFLSLIKHLLEMKYGKQKGSEPELCAMSNMMEFDTVVELLEKMVEHSVTPNAKSYEKLILGICEVGNLRVAEKVFDHMQRNEGISPSELVFNALLSCCCKLKKHNEAAKVVDDMICVGHLPQLESCKVLICGLYKKGEKERGTSVFQNLLQCGYYEDELAWKIIIDGVGKQGLVEAFYELFNVMEKNGCKFSSQTYSLLIEGPPDST</sequence>
<keyword id="KW-1185">Reference proteome</keyword>
<keyword id="KW-0677">Repeat</keyword>
<protein>
    <recommendedName>
        <fullName>Pentatricopeptide repeat-containing protein At5g65560</fullName>
    </recommendedName>
</protein>
<name>PP445_ARATH</name>
<feature type="chain" id="PRO_0000363582" description="Pentatricopeptide repeat-containing protein At5g65560">
    <location>
        <begin position="1"/>
        <end position="915"/>
    </location>
</feature>
<feature type="repeat" description="PPR 1">
    <location>
        <begin position="182"/>
        <end position="216"/>
    </location>
</feature>
<feature type="repeat" description="PPR 2">
    <location>
        <begin position="217"/>
        <end position="251"/>
    </location>
</feature>
<feature type="repeat" description="PPR 3">
    <location>
        <begin position="252"/>
        <end position="286"/>
    </location>
</feature>
<feature type="repeat" description="PPR 4">
    <location>
        <begin position="287"/>
        <end position="321"/>
    </location>
</feature>
<feature type="repeat" description="PPR 5">
    <location>
        <begin position="322"/>
        <end position="356"/>
    </location>
</feature>
<feature type="repeat" description="PPR 6">
    <location>
        <begin position="357"/>
        <end position="391"/>
    </location>
</feature>
<feature type="repeat" description="PPR 7">
    <location>
        <begin position="392"/>
        <end position="426"/>
    </location>
</feature>
<feature type="repeat" description="PPR 8">
    <location>
        <begin position="427"/>
        <end position="460"/>
    </location>
</feature>
<feature type="repeat" description="PPR 9">
    <location>
        <begin position="461"/>
        <end position="495"/>
    </location>
</feature>
<feature type="repeat" description="PPR 10">
    <location>
        <begin position="496"/>
        <end position="530"/>
    </location>
</feature>
<feature type="repeat" description="PPR 11">
    <location>
        <begin position="531"/>
        <end position="565"/>
    </location>
</feature>
<feature type="repeat" description="PPR 12">
    <location>
        <begin position="566"/>
        <end position="600"/>
    </location>
</feature>
<feature type="repeat" description="PPR 13">
    <location>
        <begin position="601"/>
        <end position="635"/>
    </location>
</feature>
<feature type="repeat" description="PPR 14">
    <location>
        <begin position="636"/>
        <end position="670"/>
    </location>
</feature>
<feature type="repeat" description="PPR 15">
    <location>
        <begin position="671"/>
        <end position="705"/>
    </location>
</feature>
<feature type="repeat" description="PPR 16">
    <location>
        <begin position="724"/>
        <end position="758"/>
    </location>
</feature>
<feature type="repeat" description="PPR 17">
    <location>
        <begin position="759"/>
        <end position="794"/>
    </location>
</feature>
<feature type="repeat" description="PPR 18">
    <location>
        <begin position="795"/>
        <end position="829"/>
    </location>
</feature>
<feature type="repeat" description="PPR 19">
    <location>
        <begin position="830"/>
        <end position="864"/>
    </location>
</feature>
<feature type="repeat" description="PPR 20">
    <location>
        <begin position="865"/>
        <end position="899"/>
    </location>
</feature>
<accession>Q9LSL9</accession>
<comment type="similarity">
    <text evidence="1">Belongs to the PPR family. P subfamily.</text>
</comment>
<comment type="online information" name="Pentatricopeptide repeat proteins">
    <link uri="https://ppr.plantenergy.uwa.edu.au"/>
</comment>
<reference key="1">
    <citation type="submission" date="1999-04" db="EMBL/GenBank/DDBJ databases">
        <title>Structural analysis of Arabidopsis thaliana chromosome 5. XI.</title>
        <authorList>
            <person name="Kaneko T."/>
            <person name="Katoh T."/>
            <person name="Asamizu E."/>
            <person name="Sato S."/>
            <person name="Nakamura Y."/>
            <person name="Kotani H."/>
            <person name="Tabata S."/>
        </authorList>
    </citation>
    <scope>NUCLEOTIDE SEQUENCE [LARGE SCALE GENOMIC DNA]</scope>
    <source>
        <strain>cv. Columbia</strain>
    </source>
</reference>
<reference key="2">
    <citation type="journal article" date="2017" name="Plant J.">
        <title>Araport11: a complete reannotation of the Arabidopsis thaliana reference genome.</title>
        <authorList>
            <person name="Cheng C.Y."/>
            <person name="Krishnakumar V."/>
            <person name="Chan A.P."/>
            <person name="Thibaud-Nissen F."/>
            <person name="Schobel S."/>
            <person name="Town C.D."/>
        </authorList>
    </citation>
    <scope>GENOME REANNOTATION</scope>
    <source>
        <strain>cv. Columbia</strain>
    </source>
</reference>
<reference key="3">
    <citation type="submission" date="2006-07" db="EMBL/GenBank/DDBJ databases">
        <title>Large-scale analysis of RIKEN Arabidopsis full-length (RAFL) cDNAs.</title>
        <authorList>
            <person name="Totoki Y."/>
            <person name="Seki M."/>
            <person name="Ishida J."/>
            <person name="Nakajima M."/>
            <person name="Enju A."/>
            <person name="Kamiya A."/>
            <person name="Narusaka M."/>
            <person name="Shin-i T."/>
            <person name="Nakagawa M."/>
            <person name="Sakamoto N."/>
            <person name="Oishi K."/>
            <person name="Kohara Y."/>
            <person name="Kobayashi M."/>
            <person name="Toyoda A."/>
            <person name="Sakaki Y."/>
            <person name="Sakurai T."/>
            <person name="Iida K."/>
            <person name="Akiyama K."/>
            <person name="Satou M."/>
            <person name="Toyoda T."/>
            <person name="Konagaya A."/>
            <person name="Carninci P."/>
            <person name="Kawai J."/>
            <person name="Hayashizaki Y."/>
            <person name="Shinozaki K."/>
        </authorList>
    </citation>
    <scope>NUCLEOTIDE SEQUENCE [LARGE SCALE MRNA]</scope>
    <source>
        <strain>cv. Columbia</strain>
    </source>
</reference>
<reference key="4">
    <citation type="journal article" date="2004" name="Plant Cell">
        <title>Genome-wide analysis of Arabidopsis pentatricopeptide repeat proteins reveals their essential role in organelle biogenesis.</title>
        <authorList>
            <person name="Lurin C."/>
            <person name="Andres C."/>
            <person name="Aubourg S."/>
            <person name="Bellaoui M."/>
            <person name="Bitton F."/>
            <person name="Bruyere C."/>
            <person name="Caboche M."/>
            <person name="Debast C."/>
            <person name="Gualberto J."/>
            <person name="Hoffmann B."/>
            <person name="Lecharny A."/>
            <person name="Le Ret M."/>
            <person name="Martin-Magniette M.-L."/>
            <person name="Mireau H."/>
            <person name="Peeters N."/>
            <person name="Renou J.-P."/>
            <person name="Szurek B."/>
            <person name="Taconnat L."/>
            <person name="Small I."/>
        </authorList>
    </citation>
    <scope>GENE FAMILY</scope>
</reference>
<evidence type="ECO:0000305" key="1"/>
<dbReference type="EMBL" id="AB026639">
    <property type="protein sequence ID" value="BAA98175.1"/>
    <property type="molecule type" value="Genomic_DNA"/>
</dbReference>
<dbReference type="EMBL" id="CP002688">
    <property type="protein sequence ID" value="AED98071.1"/>
    <property type="molecule type" value="Genomic_DNA"/>
</dbReference>
<dbReference type="EMBL" id="CP002688">
    <property type="protein sequence ID" value="ANM70230.1"/>
    <property type="molecule type" value="Genomic_DNA"/>
</dbReference>
<dbReference type="EMBL" id="CP002688">
    <property type="protein sequence ID" value="ANM70231.1"/>
    <property type="molecule type" value="Genomic_DNA"/>
</dbReference>
<dbReference type="EMBL" id="AK228697">
    <property type="protein sequence ID" value="BAF00601.1"/>
    <property type="molecule type" value="mRNA"/>
</dbReference>
<dbReference type="RefSeq" id="NP_001331859.1">
    <property type="nucleotide sequence ID" value="NM_001345697.1"/>
</dbReference>
<dbReference type="RefSeq" id="NP_001331860.1">
    <property type="nucleotide sequence ID" value="NM_001345698.1"/>
</dbReference>
<dbReference type="RefSeq" id="NP_201359.1">
    <property type="nucleotide sequence ID" value="NM_125954.6"/>
</dbReference>
<dbReference type="SMR" id="Q9LSL9"/>
<dbReference type="FunCoup" id="Q9LSL9">
    <property type="interactions" value="1117"/>
</dbReference>
<dbReference type="PaxDb" id="3702-AT5G65560.1"/>
<dbReference type="ProteomicsDB" id="249326"/>
<dbReference type="EnsemblPlants" id="AT5G65560.1">
    <property type="protein sequence ID" value="AT5G65560.1"/>
    <property type="gene ID" value="AT5G65560"/>
</dbReference>
<dbReference type="EnsemblPlants" id="AT5G65560.2">
    <property type="protein sequence ID" value="AT5G65560.2"/>
    <property type="gene ID" value="AT5G65560"/>
</dbReference>
<dbReference type="EnsemblPlants" id="AT5G65560.3">
    <property type="protein sequence ID" value="AT5G65560.3"/>
    <property type="gene ID" value="AT5G65560"/>
</dbReference>
<dbReference type="GeneID" id="836682"/>
<dbReference type="Gramene" id="AT5G65560.1">
    <property type="protein sequence ID" value="AT5G65560.1"/>
    <property type="gene ID" value="AT5G65560"/>
</dbReference>
<dbReference type="Gramene" id="AT5G65560.2">
    <property type="protein sequence ID" value="AT5G65560.2"/>
    <property type="gene ID" value="AT5G65560"/>
</dbReference>
<dbReference type="Gramene" id="AT5G65560.3">
    <property type="protein sequence ID" value="AT5G65560.3"/>
    <property type="gene ID" value="AT5G65560"/>
</dbReference>
<dbReference type="KEGG" id="ath:AT5G65560"/>
<dbReference type="Araport" id="AT5G65560"/>
<dbReference type="TAIR" id="AT5G65560"/>
<dbReference type="eggNOG" id="KOG4197">
    <property type="taxonomic scope" value="Eukaryota"/>
</dbReference>
<dbReference type="HOGENOM" id="CLU_002706_49_3_1"/>
<dbReference type="InParanoid" id="Q9LSL9"/>
<dbReference type="OMA" id="EPETFTC"/>
<dbReference type="PhylomeDB" id="Q9LSL9"/>
<dbReference type="PRO" id="PR:Q9LSL9"/>
<dbReference type="Proteomes" id="UP000006548">
    <property type="component" value="Chromosome 5"/>
</dbReference>
<dbReference type="ExpressionAtlas" id="Q9LSL9">
    <property type="expression patterns" value="baseline and differential"/>
</dbReference>
<dbReference type="FunFam" id="1.25.40.10:FF:000558">
    <property type="entry name" value="Pentatricopeptide repeat-containing protein At5g39710"/>
    <property type="match status" value="2"/>
</dbReference>
<dbReference type="Gene3D" id="1.25.40.10">
    <property type="entry name" value="Tetratricopeptide repeat domain"/>
    <property type="match status" value="9"/>
</dbReference>
<dbReference type="InterPro" id="IPR002885">
    <property type="entry name" value="Pentatricopeptide_rpt"/>
</dbReference>
<dbReference type="InterPro" id="IPR050872">
    <property type="entry name" value="PPR_P_subfamily"/>
</dbReference>
<dbReference type="InterPro" id="IPR011990">
    <property type="entry name" value="TPR-like_helical_dom_sf"/>
</dbReference>
<dbReference type="NCBIfam" id="TIGR00756">
    <property type="entry name" value="PPR"/>
    <property type="match status" value="17"/>
</dbReference>
<dbReference type="PANTHER" id="PTHR46128">
    <property type="entry name" value="MITOCHONDRIAL GROUP I INTRON SPLICING FACTOR CCM1"/>
    <property type="match status" value="1"/>
</dbReference>
<dbReference type="PANTHER" id="PTHR46128:SF273">
    <property type="entry name" value="PENTACOTRIPEPTIDE-REPEAT REGION OF PRORP DOMAIN-CONTAINING PROTEIN"/>
    <property type="match status" value="1"/>
</dbReference>
<dbReference type="Pfam" id="PF01535">
    <property type="entry name" value="PPR"/>
    <property type="match status" value="2"/>
</dbReference>
<dbReference type="Pfam" id="PF12854">
    <property type="entry name" value="PPR_1"/>
    <property type="match status" value="1"/>
</dbReference>
<dbReference type="Pfam" id="PF13041">
    <property type="entry name" value="PPR_2"/>
    <property type="match status" value="7"/>
</dbReference>
<dbReference type="Pfam" id="PF13812">
    <property type="entry name" value="PPR_3"/>
    <property type="match status" value="1"/>
</dbReference>
<dbReference type="SUPFAM" id="SSF81901">
    <property type="entry name" value="HCP-like"/>
    <property type="match status" value="1"/>
</dbReference>
<dbReference type="PROSITE" id="PS51375">
    <property type="entry name" value="PPR"/>
    <property type="match status" value="20"/>
</dbReference>
<proteinExistence type="evidence at transcript level"/>